<evidence type="ECO:0000255" key="1">
    <source>
        <dbReference type="HAMAP-Rule" id="MF_01331"/>
    </source>
</evidence>
<evidence type="ECO:0000305" key="2"/>
<reference key="1">
    <citation type="journal article" date="2007" name="ISME J.">
        <title>Population level functional diversity in a microbial community revealed by comparative genomic and metagenomic analyses.</title>
        <authorList>
            <person name="Bhaya D."/>
            <person name="Grossman A.R."/>
            <person name="Steunou A.-S."/>
            <person name="Khuri N."/>
            <person name="Cohan F.M."/>
            <person name="Hamamura N."/>
            <person name="Melendrez M.C."/>
            <person name="Bateson M.M."/>
            <person name="Ward D.M."/>
            <person name="Heidelberg J.F."/>
        </authorList>
    </citation>
    <scope>NUCLEOTIDE SEQUENCE [LARGE SCALE GENOMIC DNA]</scope>
    <source>
        <strain>JA-3-3Ab</strain>
    </source>
</reference>
<comment type="function">
    <text evidence="1">This protein binds specifically to 23S rRNA; its binding is stimulated by other ribosomal proteins, e.g. L4, L17, and L20. It is important during the early stages of 50S assembly. It makes multiple contacts with different domains of the 23S rRNA in the assembled 50S subunit and ribosome (By similarity).</text>
</comment>
<comment type="function">
    <text evidence="1">The globular domain of the protein is located near the polypeptide exit tunnel on the outside of the subunit, while an extended beta-hairpin is found that lines the wall of the exit tunnel in the center of the 70S ribosome.</text>
</comment>
<comment type="subunit">
    <text evidence="1">Part of the 50S ribosomal subunit.</text>
</comment>
<comment type="similarity">
    <text evidence="1">Belongs to the universal ribosomal protein uL22 family.</text>
</comment>
<proteinExistence type="inferred from homology"/>
<keyword id="KW-0687">Ribonucleoprotein</keyword>
<keyword id="KW-0689">Ribosomal protein</keyword>
<keyword id="KW-0694">RNA-binding</keyword>
<keyword id="KW-0699">rRNA-binding</keyword>
<organism>
    <name type="scientific">Synechococcus sp. (strain JA-3-3Ab)</name>
    <name type="common">Cyanobacteria bacterium Yellowstone A-Prime</name>
    <dbReference type="NCBI Taxonomy" id="321327"/>
    <lineage>
        <taxon>Bacteria</taxon>
        <taxon>Bacillati</taxon>
        <taxon>Cyanobacteriota</taxon>
        <taxon>Cyanophyceae</taxon>
        <taxon>Synechococcales</taxon>
        <taxon>Synechococcaceae</taxon>
        <taxon>Synechococcus</taxon>
    </lineage>
</organism>
<gene>
    <name evidence="1" type="primary">rplV</name>
    <name evidence="1" type="synonym">rpl22</name>
    <name type="ordered locus">CYA_1173</name>
</gene>
<accession>Q2JV86</accession>
<protein>
    <recommendedName>
        <fullName evidence="1">Large ribosomal subunit protein uL22</fullName>
    </recommendedName>
    <alternativeName>
        <fullName evidence="2">50S ribosomal protein L22</fullName>
    </alternativeName>
</protein>
<name>RL22_SYNJA</name>
<dbReference type="EMBL" id="CP000239">
    <property type="protein sequence ID" value="ABC99361.1"/>
    <property type="molecule type" value="Genomic_DNA"/>
</dbReference>
<dbReference type="RefSeq" id="WP_011430042.1">
    <property type="nucleotide sequence ID" value="NC_007775.1"/>
</dbReference>
<dbReference type="SMR" id="Q2JV86"/>
<dbReference type="STRING" id="321327.CYA_1173"/>
<dbReference type="KEGG" id="cya:CYA_1173"/>
<dbReference type="eggNOG" id="COG0091">
    <property type="taxonomic scope" value="Bacteria"/>
</dbReference>
<dbReference type="HOGENOM" id="CLU_083987_3_3_3"/>
<dbReference type="OrthoDB" id="9805969at2"/>
<dbReference type="Proteomes" id="UP000008818">
    <property type="component" value="Chromosome"/>
</dbReference>
<dbReference type="GO" id="GO:0022625">
    <property type="term" value="C:cytosolic large ribosomal subunit"/>
    <property type="evidence" value="ECO:0007669"/>
    <property type="project" value="TreeGrafter"/>
</dbReference>
<dbReference type="GO" id="GO:0019843">
    <property type="term" value="F:rRNA binding"/>
    <property type="evidence" value="ECO:0007669"/>
    <property type="project" value="UniProtKB-UniRule"/>
</dbReference>
<dbReference type="GO" id="GO:0003735">
    <property type="term" value="F:structural constituent of ribosome"/>
    <property type="evidence" value="ECO:0007669"/>
    <property type="project" value="InterPro"/>
</dbReference>
<dbReference type="GO" id="GO:0006412">
    <property type="term" value="P:translation"/>
    <property type="evidence" value="ECO:0007669"/>
    <property type="project" value="UniProtKB-UniRule"/>
</dbReference>
<dbReference type="CDD" id="cd00336">
    <property type="entry name" value="Ribosomal_L22"/>
    <property type="match status" value="1"/>
</dbReference>
<dbReference type="FunFam" id="3.90.470.10:FF:000004">
    <property type="entry name" value="50S ribosomal protein L22, chloroplastic"/>
    <property type="match status" value="1"/>
</dbReference>
<dbReference type="Gene3D" id="3.90.470.10">
    <property type="entry name" value="Ribosomal protein L22/L17"/>
    <property type="match status" value="1"/>
</dbReference>
<dbReference type="HAMAP" id="MF_01331_B">
    <property type="entry name" value="Ribosomal_uL22_B"/>
    <property type="match status" value="1"/>
</dbReference>
<dbReference type="InterPro" id="IPR001063">
    <property type="entry name" value="Ribosomal_uL22"/>
</dbReference>
<dbReference type="InterPro" id="IPR005727">
    <property type="entry name" value="Ribosomal_uL22_bac/chlpt-type"/>
</dbReference>
<dbReference type="InterPro" id="IPR047867">
    <property type="entry name" value="Ribosomal_uL22_bac/org-type"/>
</dbReference>
<dbReference type="InterPro" id="IPR018260">
    <property type="entry name" value="Ribosomal_uL22_CS"/>
</dbReference>
<dbReference type="InterPro" id="IPR036394">
    <property type="entry name" value="Ribosomal_uL22_sf"/>
</dbReference>
<dbReference type="NCBIfam" id="TIGR01044">
    <property type="entry name" value="rplV_bact"/>
    <property type="match status" value="1"/>
</dbReference>
<dbReference type="PANTHER" id="PTHR13501">
    <property type="entry name" value="CHLOROPLAST 50S RIBOSOMAL PROTEIN L22-RELATED"/>
    <property type="match status" value="1"/>
</dbReference>
<dbReference type="PANTHER" id="PTHR13501:SF8">
    <property type="entry name" value="LARGE RIBOSOMAL SUBUNIT PROTEIN UL22M"/>
    <property type="match status" value="1"/>
</dbReference>
<dbReference type="Pfam" id="PF00237">
    <property type="entry name" value="Ribosomal_L22"/>
    <property type="match status" value="1"/>
</dbReference>
<dbReference type="SUPFAM" id="SSF54843">
    <property type="entry name" value="Ribosomal protein L22"/>
    <property type="match status" value="1"/>
</dbReference>
<dbReference type="PROSITE" id="PS00464">
    <property type="entry name" value="RIBOSOMAL_L22"/>
    <property type="match status" value="1"/>
</dbReference>
<feature type="chain" id="PRO_0000243219" description="Large ribosomal subunit protein uL22">
    <location>
        <begin position="1"/>
        <end position="123"/>
    </location>
</feature>
<sequence length="123" mass="13858">MADPSPEIKAVARYIRMSPYKVRRVLNQIRGRTYADALILLEFMPYAACEPVRKVLRSAVANAEHNNGLDPRDLVISKAYADQGPTLKRFRPRAQGRAYPIRKRTCHITIAVRPIEPEAATAS</sequence>